<gene>
    <name evidence="1" type="primary">groEL</name>
    <name evidence="1" type="synonym">groL</name>
    <name type="ordered locus">SbBS512_E4672</name>
</gene>
<sequence length="548" mass="57329">MAAKDVKFGNDARVKMLRGVNVLADAVKVTLGPKGRNVVLDKSFGAPTITKDGVSVAREIELEDKFENMGAQMVKEVASKANDAAGDGTTTATVLAQAIITEGLKAVAAGMNPMDLKRGIDKAVTAAVEELKALSVPCSDSKAIAQVGTISANSDETVGKLIAEAMDKVGKEGVITVEDGTGLQDELDVVEGMQFDRGYLSPYFINKPETGAVELESPFILLADKKISNIREMLPVLEAVAKAGKPLLIIAEDVEGEALATLVVNTMRGIVKVAAVKAPGFGDRRKAMLQDIATLTGGTVISEEIGMELEKATLEDLGQAKRVVINKDTTTIIDGVGEEAAIQGRVAQIRQQIEEATSDYDREKLQERVAKLAGGVAVIKVGAATEVEMKEKKARVEDALHATRAAVEEGVVAGGGVALIRVASKLADLRGQNEDQNVGIKVALRAMEAPLRQIVLNCGEEPSVVANTVKGGDGNYGYNAATEEYGNMIDMGILDPTKVTRSALQYAASVAGLMITTECMVTDLPKNDAADLGAAGGMGGMGGMGGMM</sequence>
<protein>
    <recommendedName>
        <fullName evidence="1">Chaperonin GroEL</fullName>
        <ecNumber evidence="1">5.6.1.7</ecNumber>
    </recommendedName>
    <alternativeName>
        <fullName evidence="1">60 kDa chaperonin</fullName>
    </alternativeName>
    <alternativeName>
        <fullName evidence="1">Chaperonin-60</fullName>
        <shortName evidence="1">Cpn60</shortName>
    </alternativeName>
</protein>
<proteinExistence type="inferred from homology"/>
<reference key="1">
    <citation type="submission" date="2008-05" db="EMBL/GenBank/DDBJ databases">
        <title>Complete sequence of Shigella boydii serotype 18 strain BS512.</title>
        <authorList>
            <person name="Rasko D.A."/>
            <person name="Rosovitz M."/>
            <person name="Maurelli A.T."/>
            <person name="Myers G."/>
            <person name="Seshadri R."/>
            <person name="Cer R."/>
            <person name="Jiang L."/>
            <person name="Ravel J."/>
            <person name="Sebastian Y."/>
        </authorList>
    </citation>
    <scope>NUCLEOTIDE SEQUENCE [LARGE SCALE GENOMIC DNA]</scope>
    <source>
        <strain>CDC 3083-94 / BS512</strain>
    </source>
</reference>
<name>CH60_SHIB3</name>
<feature type="chain" id="PRO_1000130060" description="Chaperonin GroEL">
    <location>
        <begin position="1"/>
        <end position="548"/>
    </location>
</feature>
<feature type="binding site" evidence="1">
    <location>
        <begin position="30"/>
        <end position="33"/>
    </location>
    <ligand>
        <name>ATP</name>
        <dbReference type="ChEBI" id="CHEBI:30616"/>
    </ligand>
</feature>
<feature type="binding site" evidence="1">
    <location>
        <position position="51"/>
    </location>
    <ligand>
        <name>ATP</name>
        <dbReference type="ChEBI" id="CHEBI:30616"/>
    </ligand>
</feature>
<feature type="binding site" evidence="1">
    <location>
        <begin position="87"/>
        <end position="91"/>
    </location>
    <ligand>
        <name>ATP</name>
        <dbReference type="ChEBI" id="CHEBI:30616"/>
    </ligand>
</feature>
<feature type="binding site" evidence="1">
    <location>
        <position position="415"/>
    </location>
    <ligand>
        <name>ATP</name>
        <dbReference type="ChEBI" id="CHEBI:30616"/>
    </ligand>
</feature>
<feature type="binding site" evidence="1">
    <location>
        <begin position="479"/>
        <end position="481"/>
    </location>
    <ligand>
        <name>ATP</name>
        <dbReference type="ChEBI" id="CHEBI:30616"/>
    </ligand>
</feature>
<feature type="binding site" evidence="1">
    <location>
        <position position="495"/>
    </location>
    <ligand>
        <name>ATP</name>
        <dbReference type="ChEBI" id="CHEBI:30616"/>
    </ligand>
</feature>
<accession>B2TY18</accession>
<comment type="function">
    <text evidence="1">Together with its co-chaperonin GroES, plays an essential role in assisting protein folding. The GroEL-GroES system forms a nano-cage that allows encapsulation of the non-native substrate proteins and provides a physical environment optimized to promote and accelerate protein folding.</text>
</comment>
<comment type="catalytic activity">
    <reaction evidence="1">
        <text>ATP + H2O + a folded polypeptide = ADP + phosphate + an unfolded polypeptide.</text>
        <dbReference type="EC" id="5.6.1.7"/>
    </reaction>
</comment>
<comment type="subunit">
    <text evidence="1">Forms a cylinder of 14 subunits composed of two heptameric rings stacked back-to-back. Interacts with the co-chaperonin GroES.</text>
</comment>
<comment type="subcellular location">
    <subcellularLocation>
        <location evidence="1">Cytoplasm</location>
    </subcellularLocation>
</comment>
<comment type="similarity">
    <text evidence="1">Belongs to the chaperonin (HSP60) family.</text>
</comment>
<evidence type="ECO:0000255" key="1">
    <source>
        <dbReference type="HAMAP-Rule" id="MF_00600"/>
    </source>
</evidence>
<dbReference type="EC" id="5.6.1.7" evidence="1"/>
<dbReference type="EMBL" id="CP001063">
    <property type="protein sequence ID" value="ACD10522.1"/>
    <property type="molecule type" value="Genomic_DNA"/>
</dbReference>
<dbReference type="RefSeq" id="WP_000729117.1">
    <property type="nucleotide sequence ID" value="NC_010658.1"/>
</dbReference>
<dbReference type="SMR" id="B2TY18"/>
<dbReference type="STRING" id="344609.SbBS512_E4672"/>
<dbReference type="GeneID" id="93777681"/>
<dbReference type="KEGG" id="sbc:SbBS512_E4672"/>
<dbReference type="HOGENOM" id="CLU_016503_3_0_6"/>
<dbReference type="Proteomes" id="UP000001030">
    <property type="component" value="Chromosome"/>
</dbReference>
<dbReference type="GO" id="GO:0005737">
    <property type="term" value="C:cytoplasm"/>
    <property type="evidence" value="ECO:0007669"/>
    <property type="project" value="UniProtKB-SubCell"/>
</dbReference>
<dbReference type="GO" id="GO:0005524">
    <property type="term" value="F:ATP binding"/>
    <property type="evidence" value="ECO:0007669"/>
    <property type="project" value="UniProtKB-UniRule"/>
</dbReference>
<dbReference type="GO" id="GO:0140662">
    <property type="term" value="F:ATP-dependent protein folding chaperone"/>
    <property type="evidence" value="ECO:0007669"/>
    <property type="project" value="InterPro"/>
</dbReference>
<dbReference type="GO" id="GO:0016853">
    <property type="term" value="F:isomerase activity"/>
    <property type="evidence" value="ECO:0007669"/>
    <property type="project" value="UniProtKB-KW"/>
</dbReference>
<dbReference type="GO" id="GO:0051082">
    <property type="term" value="F:unfolded protein binding"/>
    <property type="evidence" value="ECO:0007669"/>
    <property type="project" value="UniProtKB-UniRule"/>
</dbReference>
<dbReference type="GO" id="GO:0042026">
    <property type="term" value="P:protein refolding"/>
    <property type="evidence" value="ECO:0007669"/>
    <property type="project" value="UniProtKB-UniRule"/>
</dbReference>
<dbReference type="CDD" id="cd03344">
    <property type="entry name" value="GroEL"/>
    <property type="match status" value="1"/>
</dbReference>
<dbReference type="FunFam" id="1.10.560.10:FF:000001">
    <property type="entry name" value="60 kDa chaperonin"/>
    <property type="match status" value="1"/>
</dbReference>
<dbReference type="FunFam" id="3.50.7.10:FF:000001">
    <property type="entry name" value="60 kDa chaperonin"/>
    <property type="match status" value="1"/>
</dbReference>
<dbReference type="Gene3D" id="3.50.7.10">
    <property type="entry name" value="GroEL"/>
    <property type="match status" value="1"/>
</dbReference>
<dbReference type="Gene3D" id="1.10.560.10">
    <property type="entry name" value="GroEL-like equatorial domain"/>
    <property type="match status" value="1"/>
</dbReference>
<dbReference type="Gene3D" id="3.30.260.10">
    <property type="entry name" value="TCP-1-like chaperonin intermediate domain"/>
    <property type="match status" value="1"/>
</dbReference>
<dbReference type="HAMAP" id="MF_00600">
    <property type="entry name" value="CH60"/>
    <property type="match status" value="1"/>
</dbReference>
<dbReference type="InterPro" id="IPR018370">
    <property type="entry name" value="Chaperonin_Cpn60_CS"/>
</dbReference>
<dbReference type="InterPro" id="IPR001844">
    <property type="entry name" value="Cpn60/GroEL"/>
</dbReference>
<dbReference type="InterPro" id="IPR002423">
    <property type="entry name" value="Cpn60/GroEL/TCP-1"/>
</dbReference>
<dbReference type="InterPro" id="IPR027409">
    <property type="entry name" value="GroEL-like_apical_dom_sf"/>
</dbReference>
<dbReference type="InterPro" id="IPR027413">
    <property type="entry name" value="GROEL-like_equatorial_sf"/>
</dbReference>
<dbReference type="InterPro" id="IPR027410">
    <property type="entry name" value="TCP-1-like_intermed_sf"/>
</dbReference>
<dbReference type="NCBIfam" id="TIGR02348">
    <property type="entry name" value="GroEL"/>
    <property type="match status" value="1"/>
</dbReference>
<dbReference type="NCBIfam" id="NF000592">
    <property type="entry name" value="PRK00013.1"/>
    <property type="match status" value="1"/>
</dbReference>
<dbReference type="NCBIfam" id="NF009487">
    <property type="entry name" value="PRK12849.1"/>
    <property type="match status" value="1"/>
</dbReference>
<dbReference type="NCBIfam" id="NF009488">
    <property type="entry name" value="PRK12850.1"/>
    <property type="match status" value="1"/>
</dbReference>
<dbReference type="NCBIfam" id="NF009489">
    <property type="entry name" value="PRK12851.1"/>
    <property type="match status" value="1"/>
</dbReference>
<dbReference type="PANTHER" id="PTHR45633">
    <property type="entry name" value="60 KDA HEAT SHOCK PROTEIN, MITOCHONDRIAL"/>
    <property type="match status" value="1"/>
</dbReference>
<dbReference type="Pfam" id="PF00118">
    <property type="entry name" value="Cpn60_TCP1"/>
    <property type="match status" value="1"/>
</dbReference>
<dbReference type="PRINTS" id="PR00298">
    <property type="entry name" value="CHAPERONIN60"/>
</dbReference>
<dbReference type="SUPFAM" id="SSF52029">
    <property type="entry name" value="GroEL apical domain-like"/>
    <property type="match status" value="1"/>
</dbReference>
<dbReference type="SUPFAM" id="SSF48592">
    <property type="entry name" value="GroEL equatorial domain-like"/>
    <property type="match status" value="1"/>
</dbReference>
<dbReference type="SUPFAM" id="SSF54849">
    <property type="entry name" value="GroEL-intermediate domain like"/>
    <property type="match status" value="1"/>
</dbReference>
<dbReference type="PROSITE" id="PS00296">
    <property type="entry name" value="CHAPERONINS_CPN60"/>
    <property type="match status" value="1"/>
</dbReference>
<keyword id="KW-0067">ATP-binding</keyword>
<keyword id="KW-0143">Chaperone</keyword>
<keyword id="KW-0963">Cytoplasm</keyword>
<keyword id="KW-0413">Isomerase</keyword>
<keyword id="KW-0547">Nucleotide-binding</keyword>
<keyword id="KW-1185">Reference proteome</keyword>
<organism>
    <name type="scientific">Shigella boydii serotype 18 (strain CDC 3083-94 / BS512)</name>
    <dbReference type="NCBI Taxonomy" id="344609"/>
    <lineage>
        <taxon>Bacteria</taxon>
        <taxon>Pseudomonadati</taxon>
        <taxon>Pseudomonadota</taxon>
        <taxon>Gammaproteobacteria</taxon>
        <taxon>Enterobacterales</taxon>
        <taxon>Enterobacteriaceae</taxon>
        <taxon>Shigella</taxon>
    </lineage>
</organism>